<protein>
    <recommendedName>
        <fullName evidence="1">Cytosolic Fe-S cluster assembly factor nbp35</fullName>
    </recommendedName>
    <alternativeName>
        <fullName evidence="1">Nucleotide-binding protein 35</fullName>
    </alternativeName>
</protein>
<dbReference type="EMBL" id="BA000052">
    <property type="protein sequence ID" value="BAE60423.1"/>
    <property type="molecule type" value="Genomic_DNA"/>
</dbReference>
<dbReference type="RefSeq" id="XP_001727262.1">
    <property type="nucleotide sequence ID" value="XM_001727210.2"/>
</dbReference>
<dbReference type="SMR" id="Q2UDE2"/>
<dbReference type="STRING" id="510516.Q2UDE2"/>
<dbReference type="EnsemblFungi" id="BAE60423">
    <property type="protein sequence ID" value="BAE60423"/>
    <property type="gene ID" value="AO090012000208"/>
</dbReference>
<dbReference type="GeneID" id="5987736"/>
<dbReference type="KEGG" id="aor:AO090012000208"/>
<dbReference type="VEuPathDB" id="FungiDB:AO090012000208"/>
<dbReference type="HOGENOM" id="CLU_024839_0_1_1"/>
<dbReference type="OMA" id="VSGCPMR"/>
<dbReference type="OrthoDB" id="5374at5052"/>
<dbReference type="Proteomes" id="UP000006564">
    <property type="component" value="Chromosome 4"/>
</dbReference>
<dbReference type="GO" id="GO:0005829">
    <property type="term" value="C:cytosol"/>
    <property type="evidence" value="ECO:0007669"/>
    <property type="project" value="TreeGrafter"/>
</dbReference>
<dbReference type="GO" id="GO:0051539">
    <property type="term" value="F:4 iron, 4 sulfur cluster binding"/>
    <property type="evidence" value="ECO:0007669"/>
    <property type="project" value="UniProtKB-UniRule"/>
</dbReference>
<dbReference type="GO" id="GO:0005524">
    <property type="term" value="F:ATP binding"/>
    <property type="evidence" value="ECO:0007669"/>
    <property type="project" value="UniProtKB-KW"/>
</dbReference>
<dbReference type="GO" id="GO:0140663">
    <property type="term" value="F:ATP-dependent FeS chaperone activity"/>
    <property type="evidence" value="ECO:0007669"/>
    <property type="project" value="InterPro"/>
</dbReference>
<dbReference type="GO" id="GO:0046872">
    <property type="term" value="F:metal ion binding"/>
    <property type="evidence" value="ECO:0007669"/>
    <property type="project" value="UniProtKB-KW"/>
</dbReference>
<dbReference type="GO" id="GO:0016226">
    <property type="term" value="P:iron-sulfur cluster assembly"/>
    <property type="evidence" value="ECO:0007669"/>
    <property type="project" value="UniProtKB-UniRule"/>
</dbReference>
<dbReference type="CDD" id="cd02037">
    <property type="entry name" value="Mrp_NBP35"/>
    <property type="match status" value="1"/>
</dbReference>
<dbReference type="FunFam" id="3.40.50.300:FF:000427">
    <property type="entry name" value="Cytosolic Fe-S cluster assembly factor NUBP1"/>
    <property type="match status" value="1"/>
</dbReference>
<dbReference type="Gene3D" id="3.40.50.300">
    <property type="entry name" value="P-loop containing nucleotide triphosphate hydrolases"/>
    <property type="match status" value="1"/>
</dbReference>
<dbReference type="HAMAP" id="MF_02040">
    <property type="entry name" value="Mrp_NBP35"/>
    <property type="match status" value="1"/>
</dbReference>
<dbReference type="HAMAP" id="MF_03038">
    <property type="entry name" value="NUBP1"/>
    <property type="match status" value="1"/>
</dbReference>
<dbReference type="InterPro" id="IPR000808">
    <property type="entry name" value="Mrp-like_CS"/>
</dbReference>
<dbReference type="InterPro" id="IPR019591">
    <property type="entry name" value="Mrp/NBP35_ATP-bd"/>
</dbReference>
<dbReference type="InterPro" id="IPR028601">
    <property type="entry name" value="NUBP1/Nbp35"/>
</dbReference>
<dbReference type="InterPro" id="IPR027417">
    <property type="entry name" value="P-loop_NTPase"/>
</dbReference>
<dbReference type="InterPro" id="IPR033756">
    <property type="entry name" value="YlxH/NBP35"/>
</dbReference>
<dbReference type="PANTHER" id="PTHR23264:SF35">
    <property type="entry name" value="CYTOSOLIC FE-S CLUSTER ASSEMBLY FACTOR NUBP1"/>
    <property type="match status" value="1"/>
</dbReference>
<dbReference type="PANTHER" id="PTHR23264">
    <property type="entry name" value="NUCLEOTIDE-BINDING PROTEIN NBP35 YEAST -RELATED"/>
    <property type="match status" value="1"/>
</dbReference>
<dbReference type="Pfam" id="PF10609">
    <property type="entry name" value="ParA"/>
    <property type="match status" value="1"/>
</dbReference>
<dbReference type="SUPFAM" id="SSF52540">
    <property type="entry name" value="P-loop containing nucleoside triphosphate hydrolases"/>
    <property type="match status" value="1"/>
</dbReference>
<dbReference type="PROSITE" id="PS01215">
    <property type="entry name" value="MRP"/>
    <property type="match status" value="1"/>
</dbReference>
<feature type="chain" id="PRO_0000278889" description="Cytosolic Fe-S cluster assembly factor nbp35">
    <location>
        <begin position="1"/>
        <end position="325"/>
    </location>
</feature>
<feature type="region of interest" description="Disordered" evidence="2">
    <location>
        <begin position="1"/>
        <end position="26"/>
    </location>
</feature>
<feature type="binding site" evidence="1">
    <location>
        <position position="13"/>
    </location>
    <ligand>
        <name>[4Fe-4S] cluster</name>
        <dbReference type="ChEBI" id="CHEBI:49883"/>
        <label>1</label>
    </ligand>
</feature>
<feature type="binding site" evidence="1">
    <location>
        <position position="27"/>
    </location>
    <ligand>
        <name>[4Fe-4S] cluster</name>
        <dbReference type="ChEBI" id="CHEBI:49883"/>
        <label>1</label>
    </ligand>
</feature>
<feature type="binding site" evidence="1">
    <location>
        <position position="30"/>
    </location>
    <ligand>
        <name>[4Fe-4S] cluster</name>
        <dbReference type="ChEBI" id="CHEBI:49883"/>
        <label>1</label>
    </ligand>
</feature>
<feature type="binding site" evidence="1">
    <location>
        <position position="36"/>
    </location>
    <ligand>
        <name>[4Fe-4S] cluster</name>
        <dbReference type="ChEBI" id="CHEBI:49883"/>
        <label>1</label>
    </ligand>
</feature>
<feature type="binding site" evidence="1">
    <location>
        <begin position="66"/>
        <end position="73"/>
    </location>
    <ligand>
        <name>ATP</name>
        <dbReference type="ChEBI" id="CHEBI:30616"/>
    </ligand>
</feature>
<feature type="binding site" evidence="1">
    <location>
        <position position="239"/>
    </location>
    <ligand>
        <name>[4Fe-4S] cluster</name>
        <dbReference type="ChEBI" id="CHEBI:49883"/>
        <label>2</label>
        <note>ligand shared with heterodimeric partner</note>
    </ligand>
</feature>
<feature type="binding site" evidence="1">
    <location>
        <position position="242"/>
    </location>
    <ligand>
        <name>[4Fe-4S] cluster</name>
        <dbReference type="ChEBI" id="CHEBI:49883"/>
        <label>2</label>
        <note>ligand shared with heterodimeric partner</note>
    </ligand>
</feature>
<accession>Q2UDE2</accession>
<organism>
    <name type="scientific">Aspergillus oryzae (strain ATCC 42149 / RIB 40)</name>
    <name type="common">Yellow koji mold</name>
    <dbReference type="NCBI Taxonomy" id="510516"/>
    <lineage>
        <taxon>Eukaryota</taxon>
        <taxon>Fungi</taxon>
        <taxon>Dikarya</taxon>
        <taxon>Ascomycota</taxon>
        <taxon>Pezizomycotina</taxon>
        <taxon>Eurotiomycetes</taxon>
        <taxon>Eurotiomycetidae</taxon>
        <taxon>Eurotiales</taxon>
        <taxon>Aspergillaceae</taxon>
        <taxon>Aspergillus</taxon>
        <taxon>Aspergillus subgen. Circumdati</taxon>
    </lineage>
</organism>
<sequence length="325" mass="34561">MSPSLVAPEPEHCPGPESEQAGQGDACAGCPNQQICASTPKGPDPDIPIIRERLSQVRHKILVLSGKGGVGKSTFSSLLAHAFSANPDSMVGLMDTDITGPSIPKLMGVESETIHVSNAGWSPVWVTDNLGAMSVQFMLPNRDDAVIWRGPKKNGLIKQFLKDVDWGELDYLIIDTPPGTSDEHLSVNSLLKDSGVDGAVVVTTPQEVSLLDVRKEIDFCRKAGIRVLGLVENMSGFVCKNCNTESQIFRATTGGGKRLAKKMGIPFLGAVPLDPRIGMACDYGESFVDGFPDSPAAKAIKQVVRAVGQLVGEDPDTVLPDDTAE</sequence>
<comment type="function">
    <text evidence="1">Component of the cytosolic iron-sulfur (Fe/S) protein assembly (CIA) machinery. Required for maturation of extramitochondrial Fe-S proteins. The nbp35-cfd1 heterotetramer forms a Fe-S scaffold complex, mediating the de novo assembly of an Fe-S cluster and its transfer to target apoproteins.</text>
</comment>
<comment type="cofactor">
    <cofactor evidence="1">
        <name>[4Fe-4S] cluster</name>
        <dbReference type="ChEBI" id="CHEBI:49883"/>
    </cofactor>
    <text evidence="1">Binds 4 [4Fe-4S] clusters per heterotetramer. Contains two stable clusters in the N-termini of nbp35 and two labile, bridging clusters between subunits of the nbp35-cfd1 heterotetramer.</text>
</comment>
<comment type="subunit">
    <text evidence="1">Heterotetramer of 2 nbp35 and 2 cfd1 chains.</text>
</comment>
<comment type="subcellular location">
    <subcellularLocation>
        <location evidence="1">Cytoplasm</location>
    </subcellularLocation>
</comment>
<comment type="similarity">
    <text evidence="1">Belongs to the Mrp/NBP35 ATP-binding proteins family. NUBP1/NBP35 subfamily.</text>
</comment>
<proteinExistence type="inferred from homology"/>
<name>NBP35_ASPOR</name>
<reference key="1">
    <citation type="journal article" date="2005" name="Nature">
        <title>Genome sequencing and analysis of Aspergillus oryzae.</title>
        <authorList>
            <person name="Machida M."/>
            <person name="Asai K."/>
            <person name="Sano M."/>
            <person name="Tanaka T."/>
            <person name="Kumagai T."/>
            <person name="Terai G."/>
            <person name="Kusumoto K."/>
            <person name="Arima T."/>
            <person name="Akita O."/>
            <person name="Kashiwagi Y."/>
            <person name="Abe K."/>
            <person name="Gomi K."/>
            <person name="Horiuchi H."/>
            <person name="Kitamoto K."/>
            <person name="Kobayashi T."/>
            <person name="Takeuchi M."/>
            <person name="Denning D.W."/>
            <person name="Galagan J.E."/>
            <person name="Nierman W.C."/>
            <person name="Yu J."/>
            <person name="Archer D.B."/>
            <person name="Bennett J.W."/>
            <person name="Bhatnagar D."/>
            <person name="Cleveland T.E."/>
            <person name="Fedorova N.D."/>
            <person name="Gotoh O."/>
            <person name="Horikawa H."/>
            <person name="Hosoyama A."/>
            <person name="Ichinomiya M."/>
            <person name="Igarashi R."/>
            <person name="Iwashita K."/>
            <person name="Juvvadi P.R."/>
            <person name="Kato M."/>
            <person name="Kato Y."/>
            <person name="Kin T."/>
            <person name="Kokubun A."/>
            <person name="Maeda H."/>
            <person name="Maeyama N."/>
            <person name="Maruyama J."/>
            <person name="Nagasaki H."/>
            <person name="Nakajima T."/>
            <person name="Oda K."/>
            <person name="Okada K."/>
            <person name="Paulsen I."/>
            <person name="Sakamoto K."/>
            <person name="Sawano T."/>
            <person name="Takahashi M."/>
            <person name="Takase K."/>
            <person name="Terabayashi Y."/>
            <person name="Wortman J.R."/>
            <person name="Yamada O."/>
            <person name="Yamagata Y."/>
            <person name="Anazawa H."/>
            <person name="Hata Y."/>
            <person name="Koide Y."/>
            <person name="Komori T."/>
            <person name="Koyama Y."/>
            <person name="Minetoki T."/>
            <person name="Suharnan S."/>
            <person name="Tanaka A."/>
            <person name="Isono K."/>
            <person name="Kuhara S."/>
            <person name="Ogasawara N."/>
            <person name="Kikuchi H."/>
        </authorList>
    </citation>
    <scope>NUCLEOTIDE SEQUENCE [LARGE SCALE GENOMIC DNA]</scope>
    <source>
        <strain>ATCC 42149 / RIB 40</strain>
    </source>
</reference>
<gene>
    <name type="primary">nbp35</name>
    <name type="ORF">AO090012000208</name>
</gene>
<keyword id="KW-0004">4Fe-4S</keyword>
<keyword id="KW-0067">ATP-binding</keyword>
<keyword id="KW-0963">Cytoplasm</keyword>
<keyword id="KW-0408">Iron</keyword>
<keyword id="KW-0411">Iron-sulfur</keyword>
<keyword id="KW-0479">Metal-binding</keyword>
<keyword id="KW-0547">Nucleotide-binding</keyword>
<keyword id="KW-1185">Reference proteome</keyword>
<evidence type="ECO:0000255" key="1">
    <source>
        <dbReference type="HAMAP-Rule" id="MF_03038"/>
    </source>
</evidence>
<evidence type="ECO:0000256" key="2">
    <source>
        <dbReference type="SAM" id="MobiDB-lite"/>
    </source>
</evidence>